<comment type="function">
    <text evidence="1 2 6 7 8 12 13 14 16">Ion channel that contributes to passive transmembrane potassium transport and to the regulation of the resting membrane potential in brain astrocytes, but also in kidney and in other tissues (PubMed:16847696, PubMed:22431633, PubMed:24368895). Forms dimeric channels through which potassium ions pass in accordance with their electrochemical gradient. The channel is selective for K(+) ions at physiological potassium concentrations and at neutral pH, but becomes permeable to Na(+) at subphysiological K(+) levels and upon acidification of the extracellular medium. The homodimer has very low potassium channel activity, when expressed in heterologous systems, and can function as weakly inward rectifying potassium channel (PubMed:24496152, PubMed:9013852). Channel activity is modulated by activation of serotonin receptors (PubMed:24368895). Heterodimeric channels containing KCNK1 and KCNK2 have much higher activity, and may represent the predominant form in astrocytes (PubMed:24496152). Heterodimeric channels containing KCNK1 and KCNK3 or KCNK9 have much higher activity. Heterodimeric channels formed by KCNK1 and KCNK9 may contribute to halothane-sensitive currents (By similarity). Mediates outward rectifying potassium currents in dentate gyrus granule cells and contributes to the regulation of their resting membrane potential (PubMed:25406588). Contributes to the regulation of action potential firing in dentate gyrus granule cells and down-regulates their intrinsic excitability (PubMed:25406588). In astrocytes, the heterodimer formed by KCNK1 and KCNK2 is required for rapid glutamate release in response to activation of G-protein coupled receptors, such as F2R and CNR1 (PubMed:24496152). Required for normal ion and water transport in the kidney (PubMed:16025300). Contributes to the regulation of the resting membrane potential of pancreatic beta cells (PubMed:22431633). The low channel activity of homodimeric KCNK1 may be due to sumoylation. The low channel activity may be due to rapid internalization from the cell membrane and retention in recycling endosomes (PubMed:15540117). Permeable to monovalent cations with ion selectivity for K(+) &gt; Rb(+) &gt;&gt; NH4(+) &gt;&gt; Cs(+) = Na(+) = Li(+).</text>
</comment>
<comment type="catalytic activity">
    <reaction evidence="16">
        <text>K(+)(in) = K(+)(out)</text>
        <dbReference type="Rhea" id="RHEA:29463"/>
        <dbReference type="ChEBI" id="CHEBI:29103"/>
    </reaction>
</comment>
<comment type="catalytic activity">
    <reaction evidence="1">
        <text>NH4(+)(in) = NH4(+)(out)</text>
        <dbReference type="Rhea" id="RHEA:28747"/>
        <dbReference type="ChEBI" id="CHEBI:28938"/>
    </reaction>
</comment>
<comment type="catalytic activity">
    <reaction evidence="1">
        <text>Na(+)(in) = Na(+)(out)</text>
        <dbReference type="Rhea" id="RHEA:34963"/>
        <dbReference type="ChEBI" id="CHEBI:29101"/>
    </reaction>
</comment>
<comment type="catalytic activity">
    <reaction evidence="1">
        <text>Rb(+)(in) = Rb(+)(out)</text>
        <dbReference type="Rhea" id="RHEA:78547"/>
        <dbReference type="ChEBI" id="CHEBI:49847"/>
    </reaction>
</comment>
<comment type="catalytic activity">
    <reaction evidence="1">
        <text>Cs(+)(in) = Cs(+)(out)</text>
        <dbReference type="Rhea" id="RHEA:78555"/>
        <dbReference type="ChEBI" id="CHEBI:49547"/>
    </reaction>
</comment>
<comment type="catalytic activity">
    <reaction evidence="1">
        <text>Li(+)(in) = Li(+)(out)</text>
        <dbReference type="Rhea" id="RHEA:78551"/>
        <dbReference type="ChEBI" id="CHEBI:49713"/>
    </reaction>
</comment>
<comment type="catalytic activity">
    <reaction evidence="14">
        <text>L-glutamate(out) = L-glutamate(in)</text>
        <dbReference type="Rhea" id="RHEA:66336"/>
        <dbReference type="ChEBI" id="CHEBI:29985"/>
    </reaction>
</comment>
<comment type="catalytic activity">
    <reaction evidence="14">
        <text>chloride(in) = chloride(out)</text>
        <dbReference type="Rhea" id="RHEA:29823"/>
        <dbReference type="ChEBI" id="CHEBI:17996"/>
    </reaction>
</comment>
<comment type="activity regulation">
    <text evidence="16 21">Inhibited by quinine, quinidine, barium, and internal acidification.</text>
</comment>
<comment type="biophysicochemical properties">
    <kinetics>
        <text evidence="12 14 19">Both activation and channel closure are very rapid. Is not voltage-gated (PubMed:22431633, PubMed:24496152). The relationship between voltage and current is nearly linear (PubMed:22431633, PubMed:24496152).</text>
    </kinetics>
</comment>
<comment type="subunit">
    <text evidence="1 6 14 16">Homodimer; disulfide-linked (PubMed:9013852). Heterodimer with KCNK2; disulfide-linked (PubMed:24496152). In astrocytes, forms mostly heterodimeric potassium channels with KCNK2, with only a minor proportion of functional channels containing homodimeric KCNK1 (By similarity). Interacts with KCNK3 and KCNK9, forming functional heterodimeric channels (By similarity). Interacts with GNG4 (PubMed:24496152). Identified in a complex with PSD and ARF6; interacts only with PSD that is bound to ARF6 (PubMed:15540117). Interacts with UBE2I (By similarity).</text>
</comment>
<comment type="subcellular location">
    <subcellularLocation>
        <location evidence="6 11 13 14 16">Cell membrane</location>
        <topology evidence="19">Multi-pass membrane protein</topology>
    </subcellularLocation>
    <subcellularLocation>
        <location evidence="6">Recycling endosome</location>
    </subcellularLocation>
    <subcellularLocation>
        <location evidence="5 20">Apical cell membrane</location>
    </subcellularLocation>
    <subcellularLocation>
        <location evidence="7 13">Cytoplasmic vesicle</location>
    </subcellularLocation>
    <subcellularLocation>
        <location evidence="5 9 15">Perikaryon</location>
    </subcellularLocation>
    <subcellularLocation>
        <location evidence="15">Cell projection</location>
        <location evidence="15">Dendrite</location>
    </subcellularLocation>
    <subcellularLocation>
        <location evidence="9">Cell projection</location>
    </subcellularLocation>
    <subcellularLocation>
        <location evidence="2">Synaptic cell membrane</location>
    </subcellularLocation>
    <text evidence="2 7 9 13 14 15">The heterodimer with KCNK2 is detected at the astrocyte cell membrane (PubMed:24496152). Not detected at the astrocyte cell membrane when KCNK2 is absent (PubMed:24496152). Detected on neuronal cell bodies, and to a lesser degree on neuronal cell projections (PubMed:12855359, PubMed:17079103). Detected on hippocampus dentate gyrus granule cell bodies and to a lesser degree on proximal dendrites (PubMed:25406588). Detected at the apical cell membrane in stria vascularis in the cochlea (By similarity). Detected at the apical cell membrane of vestibular dark cells situated between the crista and the utricle in the inner ear (PubMed:12855359). Detected at the apical cell membrane in stria vascularis in the cochlea (PubMed:12855359). Detected at the apical cell membrane in kidney proximal tubule segment S1 and in subapical compartments in segments S1, S2 and S3 (PubMed:16025300). Predominantly in cytoplasmic structures in kidney distal convoluted tubules and collecting ducts (PubMed:16025300). Predominantly in cytoplasmic structures in hippocampus astrocytes; only a minor proportion of the protein is present at the cell membrane (PubMed:24368895).</text>
</comment>
<comment type="tissue specificity">
    <text evidence="6 7 10 12 13 15 16 17">Detected in spiral ganglion neurons (PubMed:17079103). Detected in hippocampus CA1 and CA1 regions and in the molecular layer of the dentate gyrus (PubMed:24368895, PubMed:25406588). Detected on hippocampus astrocytes (PubMed:24368895, PubMed:24496152). Highly expressed in the stria vascularis in the cochlea (PubMed:12855359). Detected in pancreas islet beta cells (PubMed:22431633). Detected in kidney, at brush border membranes in proximal tubules and in cytoplasmic structures in distal convoluted tubules, thick ascending limbs and collecting ducts (at protein level) (PubMed:15540117, PubMed:16025300). Widely expressed. Detected in spiral ganglion cells (PubMed:17079103). Highest expression in brain, kidney, thyroid, salivary gland, adrenal gland, prostate, epididymis, uterus, placenta, colon and jejunum. Moderate expression in eyes, pituitary, pancreas, smooth muscle, testis and ovary. Very low levels in lung, aorta, liver, heart, skeletal muscle, thymus and spleen. In the brain, highest expression in cerebellar granule cells, brainstem, hippocampus and cerebral cortex (PubMed:18222039).</text>
</comment>
<comment type="developmental stage">
    <text evidence="10 17">Detected at very low levels in the embryonic central nervous system (PubMed:18222039, PubMed:9559671). Detected as early as 7 days post conception (PubMed:9559671). Detected in dorsal root ganglia, hippocampus, olfactory epithelia and intestine at 19 dpc (PubMed:18222039). Expression in the brain increases strongly 3-8 days after birth, a period of intense postnatal brain development (PubMed:18222039, PubMed:9559671). Detected in dentate granule cells; expression levels show no significant variability during postnatal development (PubMed:18222039). Expression is higher in adults than in neonates (PubMed:18222039, PubMed:9559671).</text>
</comment>
<comment type="PTM">
    <text evidence="1">Sumoylation is controversial. Sumoylated by UBE2I. Not sumoylated when expressed in xenopus oocytes or mammalian cells. Sumoylation inactivates the channel, but does not interfere with expression at the cell membrane. Sumoylation of a single subunit is sufficient to silence the dimeric channel. Sumoylation of KCNK1 is sufficient to silence heterodimeric channels formed by KCNK1 and KCNK3 or KCNK9. Desumoylated by SENP1; this activates the channel. Desumoylated by SENP1; this strongly increases halothane-mediated activation of heterodimeric channels formed with KCNK9. SENP1 treatment has no effect.</text>
</comment>
<comment type="disruption phenotype">
    <text evidence="7 8 13">No visible phenotype on standard chow, excepting a lower urinary flow rate (PubMed:16025300). Mice appear normal and are fertile (PubMed:24368895). When kept on a low phosphate diet, both wild-type and mutant mice show strongly reduced urinary phosphate secretion. Still, mutant mice display higher fractional urinary phosphate secretion relative to wild-type, leading to reduced inorganic phosphate levels in blood plasma. The impaired phosphate homeostasis seems to be due to indirect effects on the expression of other transporters, such as SLC34A1 and AQP2 (PubMed:16025300). Principal cells from kidney collecting duct are hyperpolarized, display reduced potassium conductance and strongly reduced quinidine-sensitive potassium channel activity (PubMed:16847696). Besides, collecting ducts from mutant mouse kidney display a larger diameter relative to wild-type (PubMed:16847696).</text>
</comment>
<comment type="similarity">
    <text evidence="19">Belongs to the two pore domain potassium channel (TC 1.A.1.8) family.</text>
</comment>
<feature type="chain" id="PRO_0000101741" description="Potassium channel subfamily K member 1">
    <location>
        <begin position="1"/>
        <end position="336"/>
    </location>
</feature>
<feature type="topological domain" description="Cytoplasmic" evidence="1">
    <location>
        <begin position="1"/>
        <end position="20"/>
    </location>
</feature>
<feature type="transmembrane region" description="Helical" evidence="1">
    <location>
        <begin position="21"/>
        <end position="41"/>
    </location>
</feature>
<feature type="topological domain" description="Extracellular" evidence="1">
    <location>
        <begin position="42"/>
        <end position="103"/>
    </location>
</feature>
<feature type="intramembrane region" description="Helical; Name=Pore helix 1" evidence="1">
    <location>
        <begin position="104"/>
        <end position="116"/>
    </location>
</feature>
<feature type="intramembrane region" evidence="1">
    <location>
        <begin position="117"/>
        <end position="122"/>
    </location>
</feature>
<feature type="topological domain" description="Extracellular" evidence="1">
    <location>
        <begin position="123"/>
        <end position="132"/>
    </location>
</feature>
<feature type="transmembrane region" description="Helical" evidence="1">
    <location>
        <begin position="133"/>
        <end position="156"/>
    </location>
</feature>
<feature type="topological domain" description="Cytoplasmic" evidence="1">
    <location>
        <begin position="157"/>
        <end position="181"/>
    </location>
</feature>
<feature type="transmembrane region" description="Helical" evidence="1">
    <location>
        <begin position="182"/>
        <end position="202"/>
    </location>
</feature>
<feature type="topological domain" description="Extracellular" evidence="1">
    <location>
        <begin position="203"/>
        <end position="211"/>
    </location>
</feature>
<feature type="intramembrane region" description="Helical; Name=Pore helix 2" evidence="1">
    <location>
        <begin position="212"/>
        <end position="224"/>
    </location>
</feature>
<feature type="intramembrane region" evidence="1">
    <location>
        <begin position="225"/>
        <end position="231"/>
    </location>
</feature>
<feature type="topological domain" description="Extracellular" evidence="1">
    <location>
        <begin position="232"/>
        <end position="243"/>
    </location>
</feature>
<feature type="transmembrane region" description="Helical" evidence="1">
    <location>
        <begin position="244"/>
        <end position="267"/>
    </location>
</feature>
<feature type="topological domain" description="Cytoplasmic" evidence="1">
    <location>
        <begin position="268"/>
        <end position="336"/>
    </location>
</feature>
<feature type="region of interest" description="Selectivity filter 1" evidence="1">
    <location>
        <begin position="117"/>
        <end position="122"/>
    </location>
</feature>
<feature type="region of interest" description="Selectivity filter 2" evidence="1">
    <location>
        <begin position="225"/>
        <end position="230"/>
    </location>
</feature>
<feature type="region of interest" description="Important for intracellular retention in recycling endosomes" evidence="1">
    <location>
        <begin position="293"/>
        <end position="299"/>
    </location>
</feature>
<feature type="region of interest" description="Disordered" evidence="4">
    <location>
        <begin position="310"/>
        <end position="336"/>
    </location>
</feature>
<feature type="site" description="Important for increased permeability to Na(+) when K(+) levels are subphysiological" evidence="1">
    <location>
        <position position="118"/>
    </location>
</feature>
<feature type="site" description="Part of a hydrophobic barrier that is stochastically dewetted and limits ion permeability" evidence="1">
    <location>
        <position position="146"/>
    </location>
</feature>
<feature type="site" description="Part of a hydrophobic barrier that is stochastically dewetted and limits ion permeability" evidence="1">
    <location>
        <position position="261"/>
    </location>
</feature>
<feature type="modified residue" description="Phosphoserine" evidence="2">
    <location>
        <position position="326"/>
    </location>
</feature>
<feature type="glycosylation site" description="N-linked (GlcNAc...) asparagine" evidence="3">
    <location>
        <position position="95"/>
    </location>
</feature>
<feature type="disulfide bond" description="Interchain" evidence="1 14">
    <location>
        <position position="69"/>
    </location>
</feature>
<feature type="cross-link" description="Glycyl lysine isopeptide (Lys-Gly) (interchain with G-Cter in SUMO)" evidence="1">
    <location>
        <position position="274"/>
    </location>
</feature>
<feature type="mutagenesis site" description="Abolishes formation of a disulfide-linked heterodimer with KCNK2." evidence="14">
    <original>C</original>
    <variation>S</variation>
    <location>
        <position position="69"/>
    </location>
</feature>
<feature type="mutagenesis site" description="Abolishes potassium channel activity." evidence="14">
    <original>G</original>
    <variation>E</variation>
    <location>
        <position position="119"/>
    </location>
</feature>
<feature type="mutagenesis site" description="Increases channel expression at the cell membrane, resulting in higher channel activity." evidence="11">
    <original>IM</original>
    <variation>AA</variation>
    <location>
        <begin position="293"/>
        <end position="294"/>
    </location>
</feature>
<feature type="sequence conflict" description="In Ref. 1; AAC16973." evidence="19" ref="1">
    <original>V</original>
    <variation>E</variation>
    <location>
        <position position="44"/>
    </location>
</feature>
<feature type="sequence conflict" description="In Ref. 1; AAC16973." evidence="19" ref="1">
    <original>V</original>
    <variation>L</variation>
    <location>
        <position position="152"/>
    </location>
</feature>
<feature type="sequence conflict" description="In Ref. 1; AAC16973." evidence="19" ref="1">
    <original>A</original>
    <variation>T</variation>
    <location>
        <position position="259"/>
    </location>
</feature>
<sequence>MLQSLAGSSCVRLVERHRSAWCFGFLVLGYLLYLVFGAVVFSSVELPYEDLLRQELRKLKRRFLEEHECLSEPQLEQFLGRVLEASNYGVSVLSNASGNWNWDFTSALFFASTVLSTTGYGHTVPLSDGGKAFCIIYSVIGIPFTLLFLTAVVQRVTVHVTRRPVLYFHIRWGFSKQVVAIVHAVLLGFVTVSCFFFIPAAVFSVLEDDWNFLESFYFCFISLSTIGLGDYVPGEGYNQKFRELYKIGITCYLLLGLIAMLVVLETFCELHELKKFRKMFYVKKDKDEDLVHIMEHDQLSFSSVTEQVAGLKEEQKQSEPFVASQSPPYEDGSADH</sequence>
<organism>
    <name type="scientific">Mus musculus</name>
    <name type="common">Mouse</name>
    <dbReference type="NCBI Taxonomy" id="10090"/>
    <lineage>
        <taxon>Eukaryota</taxon>
        <taxon>Metazoa</taxon>
        <taxon>Chordata</taxon>
        <taxon>Craniata</taxon>
        <taxon>Vertebrata</taxon>
        <taxon>Euteleostomi</taxon>
        <taxon>Mammalia</taxon>
        <taxon>Eutheria</taxon>
        <taxon>Euarchontoglires</taxon>
        <taxon>Glires</taxon>
        <taxon>Rodentia</taxon>
        <taxon>Myomorpha</taxon>
        <taxon>Muroidea</taxon>
        <taxon>Muridae</taxon>
        <taxon>Murinae</taxon>
        <taxon>Mus</taxon>
        <taxon>Mus</taxon>
    </lineage>
</organism>
<name>KCNK1_MOUSE</name>
<proteinExistence type="evidence at protein level"/>
<keyword id="KW-1003">Cell membrane</keyword>
<keyword id="KW-0966">Cell projection</keyword>
<keyword id="KW-0968">Cytoplasmic vesicle</keyword>
<keyword id="KW-1015">Disulfide bond</keyword>
<keyword id="KW-0967">Endosome</keyword>
<keyword id="KW-0325">Glycoprotein</keyword>
<keyword id="KW-0407">Ion channel</keyword>
<keyword id="KW-0406">Ion transport</keyword>
<keyword id="KW-1017">Isopeptide bond</keyword>
<keyword id="KW-0472">Membrane</keyword>
<keyword id="KW-0597">Phosphoprotein</keyword>
<keyword id="KW-0630">Potassium</keyword>
<keyword id="KW-0631">Potassium channel</keyword>
<keyword id="KW-0633">Potassium transport</keyword>
<keyword id="KW-1185">Reference proteome</keyword>
<keyword id="KW-0770">Synapse</keyword>
<keyword id="KW-0812">Transmembrane</keyword>
<keyword id="KW-1133">Transmembrane helix</keyword>
<keyword id="KW-0813">Transport</keyword>
<keyword id="KW-0832">Ubl conjugation</keyword>
<dbReference type="EMBL" id="AF033017">
    <property type="protein sequence ID" value="AAC16973.1"/>
    <property type="molecule type" value="mRNA"/>
</dbReference>
<dbReference type="EMBL" id="CH466525">
    <property type="protein sequence ID" value="EDL11808.1"/>
    <property type="molecule type" value="Genomic_DNA"/>
</dbReference>
<dbReference type="EMBL" id="BC003729">
    <property type="protein sequence ID" value="AAH03729.1"/>
    <property type="molecule type" value="mRNA"/>
</dbReference>
<dbReference type="CCDS" id="CCDS22783.1"/>
<dbReference type="RefSeq" id="NP_032456.2">
    <property type="nucleotide sequence ID" value="NM_008430.2"/>
</dbReference>
<dbReference type="SMR" id="O08581"/>
<dbReference type="BioGRID" id="200907">
    <property type="interactions" value="46"/>
</dbReference>
<dbReference type="FunCoup" id="O08581">
    <property type="interactions" value="281"/>
</dbReference>
<dbReference type="IntAct" id="O08581">
    <property type="interactions" value="45"/>
</dbReference>
<dbReference type="STRING" id="10090.ENSMUSP00000046103"/>
<dbReference type="TCDB" id="1.A.1.8.1">
    <property type="family name" value="the voltage-gated ion channel (vic) superfamily"/>
</dbReference>
<dbReference type="GlyCosmos" id="O08581">
    <property type="glycosylation" value="1 site, No reported glycans"/>
</dbReference>
<dbReference type="GlyGen" id="O08581">
    <property type="glycosylation" value="1 site"/>
</dbReference>
<dbReference type="iPTMnet" id="O08581"/>
<dbReference type="PhosphoSitePlus" id="O08581"/>
<dbReference type="SwissPalm" id="O08581"/>
<dbReference type="PaxDb" id="10090-ENSMUSP00000046103"/>
<dbReference type="PeptideAtlas" id="O08581"/>
<dbReference type="ProteomicsDB" id="263403"/>
<dbReference type="Antibodypedia" id="20802">
    <property type="antibodies" value="309 antibodies from 32 providers"/>
</dbReference>
<dbReference type="DNASU" id="16525"/>
<dbReference type="Ensembl" id="ENSMUST00000046765.10">
    <property type="protein sequence ID" value="ENSMUSP00000046103.9"/>
    <property type="gene ID" value="ENSMUSG00000033998.10"/>
</dbReference>
<dbReference type="GeneID" id="16525"/>
<dbReference type="KEGG" id="mmu:16525"/>
<dbReference type="UCSC" id="uc009nyr.3">
    <property type="organism name" value="mouse"/>
</dbReference>
<dbReference type="AGR" id="MGI:109322"/>
<dbReference type="CTD" id="3775"/>
<dbReference type="MGI" id="MGI:109322">
    <property type="gene designation" value="Kcnk1"/>
</dbReference>
<dbReference type="VEuPathDB" id="HostDB:ENSMUSG00000033998"/>
<dbReference type="eggNOG" id="KOG1418">
    <property type="taxonomic scope" value="Eukaryota"/>
</dbReference>
<dbReference type="GeneTree" id="ENSGT00940000155293"/>
<dbReference type="HOGENOM" id="CLU_022504_6_0_1"/>
<dbReference type="InParanoid" id="O08581"/>
<dbReference type="OMA" id="SAWCFGL"/>
<dbReference type="OrthoDB" id="297496at2759"/>
<dbReference type="PhylomeDB" id="O08581"/>
<dbReference type="TreeFam" id="TF313947"/>
<dbReference type="Reactome" id="R-MMU-1299308">
    <property type="pathway name" value="Tandem of pore domain in a weak inwardly rectifying K+ channels (TWIK)"/>
</dbReference>
<dbReference type="Reactome" id="R-MMU-5576886">
    <property type="pathway name" value="Phase 4 - resting membrane potential"/>
</dbReference>
<dbReference type="BioGRID-ORCS" id="16525">
    <property type="hits" value="5 hits in 77 CRISPR screens"/>
</dbReference>
<dbReference type="ChiTaRS" id="Kcnk1">
    <property type="organism name" value="mouse"/>
</dbReference>
<dbReference type="PRO" id="PR:O08581"/>
<dbReference type="Proteomes" id="UP000000589">
    <property type="component" value="Chromosome 8"/>
</dbReference>
<dbReference type="RNAct" id="O08581">
    <property type="molecule type" value="protein"/>
</dbReference>
<dbReference type="Bgee" id="ENSMUSG00000033998">
    <property type="expression patterns" value="Expressed in seminal vesicle and 245 other cell types or tissues"/>
</dbReference>
<dbReference type="ExpressionAtlas" id="O08581">
    <property type="expression patterns" value="baseline and differential"/>
</dbReference>
<dbReference type="GO" id="GO:0016324">
    <property type="term" value="C:apical plasma membrane"/>
    <property type="evidence" value="ECO:0007669"/>
    <property type="project" value="UniProtKB-SubCell"/>
</dbReference>
<dbReference type="GO" id="GO:0031526">
    <property type="term" value="C:brush border membrane"/>
    <property type="evidence" value="ECO:0007669"/>
    <property type="project" value="Ensembl"/>
</dbReference>
<dbReference type="GO" id="GO:0030425">
    <property type="term" value="C:dendrite"/>
    <property type="evidence" value="ECO:0007669"/>
    <property type="project" value="UniProtKB-SubCell"/>
</dbReference>
<dbReference type="GO" id="GO:0005768">
    <property type="term" value="C:endosome"/>
    <property type="evidence" value="ECO:0000314"/>
    <property type="project" value="MGI"/>
</dbReference>
<dbReference type="GO" id="GO:1902937">
    <property type="term" value="C:inward rectifier potassium channel complex"/>
    <property type="evidence" value="ECO:0000314"/>
    <property type="project" value="UniProtKB"/>
</dbReference>
<dbReference type="GO" id="GO:0016020">
    <property type="term" value="C:membrane"/>
    <property type="evidence" value="ECO:0000250"/>
    <property type="project" value="UniProtKB"/>
</dbReference>
<dbReference type="GO" id="GO:0043204">
    <property type="term" value="C:perikaryon"/>
    <property type="evidence" value="ECO:0007669"/>
    <property type="project" value="UniProtKB-SubCell"/>
</dbReference>
<dbReference type="GO" id="GO:0005886">
    <property type="term" value="C:plasma membrane"/>
    <property type="evidence" value="ECO:0000314"/>
    <property type="project" value="UniProtKB"/>
</dbReference>
<dbReference type="GO" id="GO:0034705">
    <property type="term" value="C:potassium channel complex"/>
    <property type="evidence" value="ECO:0000250"/>
    <property type="project" value="UniProtKB"/>
</dbReference>
<dbReference type="GO" id="GO:0055037">
    <property type="term" value="C:recycling endosome"/>
    <property type="evidence" value="ECO:0007669"/>
    <property type="project" value="UniProtKB-SubCell"/>
</dbReference>
<dbReference type="GO" id="GO:0097060">
    <property type="term" value="C:synaptic membrane"/>
    <property type="evidence" value="ECO:0007669"/>
    <property type="project" value="UniProtKB-SubCell"/>
</dbReference>
<dbReference type="GO" id="GO:0042802">
    <property type="term" value="F:identical protein binding"/>
    <property type="evidence" value="ECO:0000314"/>
    <property type="project" value="UniProtKB"/>
</dbReference>
<dbReference type="GO" id="GO:0005242">
    <property type="term" value="F:inward rectifier potassium channel activity"/>
    <property type="evidence" value="ECO:0000314"/>
    <property type="project" value="UniProtKB"/>
</dbReference>
<dbReference type="GO" id="GO:0022834">
    <property type="term" value="F:ligand-gated channel activity"/>
    <property type="evidence" value="ECO:0000314"/>
    <property type="project" value="UniProtKB"/>
</dbReference>
<dbReference type="GO" id="GO:0005267">
    <property type="term" value="F:potassium channel activity"/>
    <property type="evidence" value="ECO:0000314"/>
    <property type="project" value="MGI"/>
</dbReference>
<dbReference type="GO" id="GO:0022841">
    <property type="term" value="F:potassium ion leak channel activity"/>
    <property type="evidence" value="ECO:0000250"/>
    <property type="project" value="UniProtKB"/>
</dbReference>
<dbReference type="GO" id="GO:0046982">
    <property type="term" value="F:protein heterodimerization activity"/>
    <property type="evidence" value="ECO:0000314"/>
    <property type="project" value="UniProtKB"/>
</dbReference>
<dbReference type="GO" id="GO:0005272">
    <property type="term" value="F:sodium channel activity"/>
    <property type="evidence" value="ECO:0000250"/>
    <property type="project" value="UniProtKB"/>
</dbReference>
<dbReference type="GO" id="GO:1905030">
    <property type="term" value="F:voltage-gated monoatomic ion channel activity involved in regulation of postsynaptic membrane potential"/>
    <property type="evidence" value="ECO:0000314"/>
    <property type="project" value="SynGO"/>
</dbReference>
<dbReference type="GO" id="GO:0071468">
    <property type="term" value="P:cellular response to acidic pH"/>
    <property type="evidence" value="ECO:0007669"/>
    <property type="project" value="Ensembl"/>
</dbReference>
<dbReference type="GO" id="GO:1902476">
    <property type="term" value="P:chloride transmembrane transport"/>
    <property type="evidence" value="ECO:0000314"/>
    <property type="project" value="UniProtKB"/>
</dbReference>
<dbReference type="GO" id="GO:0014047">
    <property type="term" value="P:glutamate secretion"/>
    <property type="evidence" value="ECO:0000314"/>
    <property type="project" value="UniProtKB"/>
</dbReference>
<dbReference type="GO" id="GO:0071805">
    <property type="term" value="P:potassium ion transmembrane transport"/>
    <property type="evidence" value="ECO:0000314"/>
    <property type="project" value="UniProtKB"/>
</dbReference>
<dbReference type="GO" id="GO:0006813">
    <property type="term" value="P:potassium ion transport"/>
    <property type="evidence" value="ECO:0000305"/>
    <property type="project" value="MGI"/>
</dbReference>
<dbReference type="GO" id="GO:0060075">
    <property type="term" value="P:regulation of resting membrane potential"/>
    <property type="evidence" value="ECO:0000250"/>
    <property type="project" value="UniProtKB"/>
</dbReference>
<dbReference type="GO" id="GO:0035094">
    <property type="term" value="P:response to nicotine"/>
    <property type="evidence" value="ECO:0007669"/>
    <property type="project" value="Ensembl"/>
</dbReference>
<dbReference type="GO" id="GO:0035725">
    <property type="term" value="P:sodium ion transmembrane transport"/>
    <property type="evidence" value="ECO:0000250"/>
    <property type="project" value="UniProtKB"/>
</dbReference>
<dbReference type="FunFam" id="1.10.287.70:FF:000076">
    <property type="entry name" value="Potassium channel subfamily K member"/>
    <property type="match status" value="1"/>
</dbReference>
<dbReference type="Gene3D" id="1.10.287.70">
    <property type="match status" value="1"/>
</dbReference>
<dbReference type="InterPro" id="IPR003280">
    <property type="entry name" value="2pore_dom_K_chnl"/>
</dbReference>
<dbReference type="InterPro" id="IPR003092">
    <property type="entry name" value="2pore_dom_K_chnl_TASK"/>
</dbReference>
<dbReference type="InterPro" id="IPR005408">
    <property type="entry name" value="2pore_dom_K_chnl_TWIK"/>
</dbReference>
<dbReference type="InterPro" id="IPR001779">
    <property type="entry name" value="2pore_dom_K_chnl_TWIK1"/>
</dbReference>
<dbReference type="InterPro" id="IPR013099">
    <property type="entry name" value="K_chnl_dom"/>
</dbReference>
<dbReference type="PANTHER" id="PTHR11003:SF59">
    <property type="entry name" value="POTASSIUM CHANNEL SUBFAMILY K MEMBER 1"/>
    <property type="match status" value="1"/>
</dbReference>
<dbReference type="PANTHER" id="PTHR11003">
    <property type="entry name" value="POTASSIUM CHANNEL, SUBFAMILY K"/>
    <property type="match status" value="1"/>
</dbReference>
<dbReference type="Pfam" id="PF07885">
    <property type="entry name" value="Ion_trans_2"/>
    <property type="match status" value="2"/>
</dbReference>
<dbReference type="PIRSF" id="PIRSF038061">
    <property type="entry name" value="K_channel_subfamily_K_type"/>
    <property type="match status" value="1"/>
</dbReference>
<dbReference type="PRINTS" id="PR01333">
    <property type="entry name" value="2POREKCHANEL"/>
</dbReference>
<dbReference type="PRINTS" id="PR01096">
    <property type="entry name" value="TWIK1CHANNEL"/>
</dbReference>
<dbReference type="PRINTS" id="PR01586">
    <property type="entry name" value="TWIKCHANNEL"/>
</dbReference>
<dbReference type="SUPFAM" id="SSF81324">
    <property type="entry name" value="Voltage-gated potassium channels"/>
    <property type="match status" value="2"/>
</dbReference>
<reference key="1">
    <citation type="journal article" date="1997" name="FEBS Lett.">
        <title>The structure, function and distribution of the mouse TWIK-1 K+ channel.</title>
        <authorList>
            <person name="Lesage F."/>
            <person name="Lauritzen I."/>
            <person name="Duprat F."/>
            <person name="Reyes R."/>
            <person name="Fink M."/>
            <person name="Heurteaux C."/>
            <person name="Lazdunski M."/>
        </authorList>
    </citation>
    <scope>NUCLEOTIDE SEQUENCE [MRNA]</scope>
    <scope>FUNCTION</scope>
    <scope>TRANSPORTER ACTIVITY</scope>
    <scope>ACTIVITY REGULATION</scope>
    <scope>SUBUNIT</scope>
    <scope>SUBCELLULAR LOCATION</scope>
    <scope>TISSUE SPECIFICITY</scope>
    <source>
        <tissue>Brain</tissue>
    </source>
</reference>
<reference key="2">
    <citation type="journal article" date="1998" name="FEBS Lett.">
        <title>Structure, chromosome localization, and tissue distribution of the mouse twik K+ channel gene.</title>
        <authorList>
            <person name="Arrighi I."/>
            <person name="Lesage F."/>
            <person name="Scimeca J.-C."/>
            <person name="Carle G.F."/>
            <person name="Barhanin J."/>
        </authorList>
    </citation>
    <scope>NUCLEOTIDE SEQUENCE [MRNA]</scope>
    <scope>TISSUE SPECIFICITY</scope>
    <scope>DEVELOPMENTAL STAGE</scope>
    <source>
        <strain>129/SvJ</strain>
        <tissue>Liver</tissue>
    </source>
</reference>
<reference key="3">
    <citation type="submission" date="2005-07" db="EMBL/GenBank/DDBJ databases">
        <authorList>
            <person name="Mural R.J."/>
            <person name="Adams M.D."/>
            <person name="Myers E.W."/>
            <person name="Smith H.O."/>
            <person name="Venter J.C."/>
        </authorList>
    </citation>
    <scope>NUCLEOTIDE SEQUENCE [LARGE SCALE GENOMIC DNA]</scope>
</reference>
<reference key="4">
    <citation type="journal article" date="2004" name="Genome Res.">
        <title>The status, quality, and expansion of the NIH full-length cDNA project: the Mammalian Gene Collection (MGC).</title>
        <authorList>
            <consortium name="The MGC Project Team"/>
        </authorList>
    </citation>
    <scope>NUCLEOTIDE SEQUENCE [LARGE SCALE MRNA]</scope>
    <source>
        <strain>FVB/N</strain>
        <tissue>Mammary tumor</tissue>
    </source>
</reference>
<reference key="5">
    <citation type="journal article" date="2003" name="Hear. Res.">
        <title>Cellular localization of TWIK-1, a two-pore-domain potassium channel in the rodent inner ear.</title>
        <authorList>
            <person name="Nicolas M.T."/>
            <person name="Barhanin J."/>
            <person name="Reyes R."/>
            <person name="Dememes D."/>
        </authorList>
    </citation>
    <scope>TISSUE SPECIFICITY</scope>
    <scope>SUBCELLULAR LOCATION</scope>
</reference>
<reference key="6">
    <citation type="journal article" date="2004" name="EMBO Rep.">
        <title>ARF6-dependent interaction of the TWIK1 K+ channel with EFA6, a GDP/GTP exchange factor for ARF6.</title>
        <authorList>
            <person name="Decressac S."/>
            <person name="Franco M."/>
            <person name="Bendahhou S."/>
            <person name="Warth R."/>
            <person name="Knauer S."/>
            <person name="Barhanin J."/>
            <person name="Lazdunski M."/>
            <person name="Lesage F."/>
        </authorList>
    </citation>
    <scope>IDENTIFICATION IN A COMPLEX WITH PSD AND ARF6</scope>
    <scope>TISSUE SPECIFICITY</scope>
    <scope>SUBCELLULAR LOCATION</scope>
</reference>
<reference key="7">
    <citation type="journal article" date="2005" name="Pflugers Arch.">
        <title>Expression and insights on function of potassium channel TWIK-1 in mouse kidney.</title>
        <authorList>
            <person name="Nie X."/>
            <person name="Arrighi I."/>
            <person name="Kaissling B."/>
            <person name="Pfaff I."/>
            <person name="Mann J."/>
            <person name="Barhanin J."/>
            <person name="Vallon V."/>
        </authorList>
    </citation>
    <scope>FUNCTION</scope>
    <scope>SUBCELLULAR LOCATION</scope>
    <scope>DISRUPTION PHENOTYPE</scope>
    <scope>TISSUE SPECIFICITY</scope>
</reference>
<reference key="8">
    <citation type="journal article" date="2006" name="Pflugers Arch.">
        <title>Adaptive downregulation of a quinidine-sensitive cation conductance in renal principal cells of TWIK-1 knockout mice.</title>
        <authorList>
            <person name="Millar I.D."/>
            <person name="Taylor H.C."/>
            <person name="Cooper G.J."/>
            <person name="Kibble J.D."/>
            <person name="Barhanin J."/>
            <person name="Robson L."/>
        </authorList>
    </citation>
    <scope>DISRUPTION PHENOTYPE</scope>
    <scope>FUNCTION</scope>
</reference>
<reference key="9">
    <citation type="journal article" date="2006" name="Hear. Res.">
        <title>Voltage-gated and two-pore-domain potassium channels in murine spiral ganglion neurons.</title>
        <authorList>
            <person name="Chen W.C."/>
            <person name="Davis R.L."/>
        </authorList>
    </citation>
    <scope>TISSUE SPECIFICITY</scope>
    <scope>SUBCELLULAR LOCATION</scope>
</reference>
<reference key="10">
    <citation type="journal article" date="2008" name="Neuroscience">
        <title>Changes in expression of some two-pore domain potassium channel genes (KCNK) in selected brain regions of developing mice.</title>
        <authorList>
            <person name="Aller M.I."/>
            <person name="Wisden W."/>
        </authorList>
    </citation>
    <scope>DEVELOPMENTAL STAGE</scope>
    <scope>TISSUE SPECIFICITY</scope>
</reference>
<reference key="11">
    <citation type="journal article" date="2010" name="Cell">
        <title>A tissue-specific atlas of mouse protein phosphorylation and expression.</title>
        <authorList>
            <person name="Huttlin E.L."/>
            <person name="Jedrychowski M.P."/>
            <person name="Elias J.E."/>
            <person name="Goswami T."/>
            <person name="Rad R."/>
            <person name="Beausoleil S.A."/>
            <person name="Villen J."/>
            <person name="Haas W."/>
            <person name="Sowa M.E."/>
            <person name="Gygi S.P."/>
        </authorList>
    </citation>
    <scope>IDENTIFICATION BY MASS SPECTROMETRY [LARGE SCALE ANALYSIS]</scope>
    <source>
        <tissue>Brain</tissue>
    </source>
</reference>
<reference key="12">
    <citation type="journal article" date="2010" name="J. Biol. Chem.">
        <title>Potassium channel silencing by constitutive endocytosis and intracellular sequestration.</title>
        <authorList>
            <person name="Feliciangeli S."/>
            <person name="Tardy M.P."/>
            <person name="Sandoz G."/>
            <person name="Chatelain F.C."/>
            <person name="Warth R."/>
            <person name="Barhanin J."/>
            <person name="Bendahhou S."/>
            <person name="Lesage F."/>
        </authorList>
    </citation>
    <scope>FUNCTION</scope>
    <scope>SUBCELLULAR LOCATION</scope>
    <scope>MUTAGENESIS OF 293-ILE-MET-294</scope>
</reference>
<reference key="13">
    <citation type="journal article" date="2012" name="Proc. Natl. Acad. Sci. U.S.A.">
        <title>TWIK1, a unique background channel with variable ion selectivity.</title>
        <authorList>
            <person name="Chatelain F.C."/>
            <person name="Bichet D."/>
            <person name="Douguet D."/>
            <person name="Feliciangeli S."/>
            <person name="Bendahhou S."/>
            <person name="Reichold M."/>
            <person name="Warth R."/>
            <person name="Barhanin J."/>
            <person name="Lesage F."/>
        </authorList>
    </citation>
    <scope>FUNCTION</scope>
    <scope>TISSUE SPECIFICITY</scope>
    <scope>BIOPHYSICOCHEMICAL PROPERTIES</scope>
</reference>
<reference key="14">
    <citation type="journal article" date="2013" name="Front. Cell. Neurosci.">
        <title>The contribution of TWIK-1 channels to astrocyte K(+) current is limited by retention in intracellular compartments.</title>
        <authorList>
            <person name="Wang W."/>
            <person name="Putra A."/>
            <person name="Schools G.P."/>
            <person name="Ma B."/>
            <person name="Chen H."/>
            <person name="Kaczmarek L.K."/>
            <person name="Barhanin J."/>
            <person name="Lesage F."/>
            <person name="Zhou M."/>
        </authorList>
    </citation>
    <scope>FUNCTION</scope>
    <scope>SUBCELLULAR LOCATION</scope>
    <scope>DISRUPTION PHENOTYPE</scope>
    <scope>TISSUE SPECIFICITY</scope>
</reference>
<reference key="15">
    <citation type="journal article" date="2015" name="J. Physiol. (Lond.)">
        <title>The family of K2P channels: salient structural and functional properties.</title>
        <authorList>
            <person name="Feliciangeli S."/>
            <person name="Chatelain F.C."/>
            <person name="Bichet D."/>
            <person name="Lesage F."/>
        </authorList>
    </citation>
    <scope>REVIEW</scope>
</reference>
<reference key="16">
    <citation type="journal article" date="2014" name="Mol. Brain">
        <title>TWIK-1 contributes to the intrinsic excitability of dentate granule cells in mouse hippocampus.</title>
        <authorList>
            <person name="Yarishkin O."/>
            <person name="Lee D.Y."/>
            <person name="Kim E."/>
            <person name="Cho C.H."/>
            <person name="Choi J.H."/>
            <person name="Lee C.J."/>
            <person name="Hwang E.M."/>
            <person name="Park J.Y."/>
        </authorList>
    </citation>
    <scope>FUNCTION</scope>
    <scope>SUBCELLULAR LOCATION</scope>
    <scope>TISSUE SPECIFICITY</scope>
</reference>
<reference key="17">
    <citation type="journal article" date="2014" name="Nat. Commun.">
        <title>A disulphide-linked heterodimer of TWIK-1 and TREK-1 mediates passive conductance in astrocytes.</title>
        <authorList>
            <person name="Hwang E.M."/>
            <person name="Kim E."/>
            <person name="Yarishkin O."/>
            <person name="Woo D.H."/>
            <person name="Han K.S."/>
            <person name="Park N."/>
            <person name="Bae Y."/>
            <person name="Woo J."/>
            <person name="Kim D."/>
            <person name="Park M."/>
            <person name="Lee C.J."/>
            <person name="Park J.Y."/>
        </authorList>
    </citation>
    <scope>FUNCTION</scope>
    <scope>TRANSPORTER ACTIVITY</scope>
    <scope>SUBUNIT</scope>
    <scope>INTERACTION WITH KCNK2 AND GNG4</scope>
    <scope>SUBCELLULAR LOCATION</scope>
    <scope>TISSUE SPECIFICITY</scope>
    <scope>MUTAGENESIS OF CYS-69 AND GLY-119</scope>
    <scope>BIOPHYSICOCHEMICAL PROPERTIES</scope>
</reference>
<reference key="18">
    <citation type="journal article" date="2015" name="Pflugers Arch.">
        <title>Silent but not dumb: how cellular trafficking and pore gating modulate expression of TWIK1 and THIK2.</title>
        <authorList>
            <person name="Bichet D."/>
            <person name="Blin S."/>
            <person name="Feliciangeli S."/>
            <person name="Chatelain F.C."/>
            <person name="Bobak N."/>
            <person name="Lesage F."/>
        </authorList>
    </citation>
    <scope>REVIEW</scope>
</reference>
<accession>O08581</accession>
<accession>Q99L99</accession>
<protein>
    <recommendedName>
        <fullName>Potassium channel subfamily K member 1</fullName>
    </recommendedName>
    <alternativeName>
        <fullName evidence="18">Inward rectifying potassium channel protein TWIK-1</fullName>
    </alternativeName>
</protein>
<evidence type="ECO:0000250" key="1">
    <source>
        <dbReference type="UniProtKB" id="O00180"/>
    </source>
</evidence>
<evidence type="ECO:0000250" key="2">
    <source>
        <dbReference type="UniProtKB" id="Q9Z2T2"/>
    </source>
</evidence>
<evidence type="ECO:0000255" key="3"/>
<evidence type="ECO:0000256" key="4">
    <source>
        <dbReference type="SAM" id="MobiDB-lite"/>
    </source>
</evidence>
<evidence type="ECO:0000269" key="5">
    <source>
    </source>
</evidence>
<evidence type="ECO:0000269" key="6">
    <source>
    </source>
</evidence>
<evidence type="ECO:0000269" key="7">
    <source>
    </source>
</evidence>
<evidence type="ECO:0000269" key="8">
    <source>
    </source>
</evidence>
<evidence type="ECO:0000269" key="9">
    <source>
    </source>
</evidence>
<evidence type="ECO:0000269" key="10">
    <source>
    </source>
</evidence>
<evidence type="ECO:0000269" key="11">
    <source>
    </source>
</evidence>
<evidence type="ECO:0000269" key="12">
    <source>
    </source>
</evidence>
<evidence type="ECO:0000269" key="13">
    <source>
    </source>
</evidence>
<evidence type="ECO:0000269" key="14">
    <source>
    </source>
</evidence>
<evidence type="ECO:0000269" key="15">
    <source>
    </source>
</evidence>
<evidence type="ECO:0000269" key="16">
    <source>
    </source>
</evidence>
<evidence type="ECO:0000269" key="17">
    <source>
    </source>
</evidence>
<evidence type="ECO:0000303" key="18">
    <source>
    </source>
</evidence>
<evidence type="ECO:0000305" key="19"/>
<evidence type="ECO:0000305" key="20">
    <source>
    </source>
</evidence>
<evidence type="ECO:0000305" key="21">
    <source>
    </source>
</evidence>
<gene>
    <name type="primary">Kcnk1</name>
</gene>